<proteinExistence type="inferred from homology"/>
<comment type="function">
    <text evidence="1">Catalyzes the sodium-dependent uptake of extracellular L-proline.</text>
</comment>
<comment type="catalytic activity">
    <reaction evidence="1">
        <text>L-proline(in) + Na(+)(in) = L-proline(out) + Na(+)(out)</text>
        <dbReference type="Rhea" id="RHEA:28967"/>
        <dbReference type="ChEBI" id="CHEBI:29101"/>
        <dbReference type="ChEBI" id="CHEBI:60039"/>
    </reaction>
</comment>
<comment type="subcellular location">
    <subcellularLocation>
        <location evidence="3">Cell membrane</location>
        <topology evidence="2">Multi-pass membrane protein</topology>
    </subcellularLocation>
</comment>
<comment type="similarity">
    <text evidence="3">Belongs to the sodium:solute symporter (SSF) (TC 2.A.21) family.</text>
</comment>
<keyword id="KW-0029">Amino-acid transport</keyword>
<keyword id="KW-1003">Cell membrane</keyword>
<keyword id="KW-0406">Ion transport</keyword>
<keyword id="KW-0472">Membrane</keyword>
<keyword id="KW-1185">Reference proteome</keyword>
<keyword id="KW-0915">Sodium</keyword>
<keyword id="KW-0739">Sodium transport</keyword>
<keyword id="KW-0769">Symport</keyword>
<keyword id="KW-0812">Transmembrane</keyword>
<keyword id="KW-1133">Transmembrane helix</keyword>
<keyword id="KW-0813">Transport</keyword>
<protein>
    <recommendedName>
        <fullName>Sodium/proline symporter 2</fullName>
    </recommendedName>
    <alternativeName>
        <fullName>Proline permease 2</fullName>
    </alternativeName>
</protein>
<evidence type="ECO:0000250" key="1">
    <source>
        <dbReference type="UniProtKB" id="P07117"/>
    </source>
</evidence>
<evidence type="ECO:0000255" key="2"/>
<evidence type="ECO:0000305" key="3"/>
<name>PUTP2_STAS1</name>
<dbReference type="EMBL" id="AP008934">
    <property type="protein sequence ID" value="BAE18034.1"/>
    <property type="molecule type" value="Genomic_DNA"/>
</dbReference>
<dbReference type="SMR" id="Q49YU6"/>
<dbReference type="GeneID" id="3617085"/>
<dbReference type="KEGG" id="ssp:SSP0889"/>
<dbReference type="PATRIC" id="fig|342451.11.peg.888"/>
<dbReference type="eggNOG" id="COG0591">
    <property type="taxonomic scope" value="Bacteria"/>
</dbReference>
<dbReference type="HOGENOM" id="CLU_018808_15_2_9"/>
<dbReference type="OrthoDB" id="9810181at2"/>
<dbReference type="Proteomes" id="UP000006371">
    <property type="component" value="Chromosome"/>
</dbReference>
<dbReference type="GO" id="GO:0005886">
    <property type="term" value="C:plasma membrane"/>
    <property type="evidence" value="ECO:0007669"/>
    <property type="project" value="UniProtKB-SubCell"/>
</dbReference>
<dbReference type="GO" id="GO:0015193">
    <property type="term" value="F:L-proline transmembrane transporter activity"/>
    <property type="evidence" value="ECO:0007669"/>
    <property type="project" value="TreeGrafter"/>
</dbReference>
<dbReference type="GO" id="GO:0005298">
    <property type="term" value="F:proline:sodium symporter activity"/>
    <property type="evidence" value="ECO:0007669"/>
    <property type="project" value="InterPro"/>
</dbReference>
<dbReference type="GO" id="GO:0031402">
    <property type="term" value="F:sodium ion binding"/>
    <property type="evidence" value="ECO:0007669"/>
    <property type="project" value="InterPro"/>
</dbReference>
<dbReference type="GO" id="GO:0015824">
    <property type="term" value="P:proline transport"/>
    <property type="evidence" value="ECO:0007669"/>
    <property type="project" value="InterPro"/>
</dbReference>
<dbReference type="CDD" id="cd11475">
    <property type="entry name" value="SLC5sbd_PutP"/>
    <property type="match status" value="1"/>
</dbReference>
<dbReference type="FunFam" id="1.20.1730.10:FF:000002">
    <property type="entry name" value="Sodium/proline symporter"/>
    <property type="match status" value="1"/>
</dbReference>
<dbReference type="Gene3D" id="1.20.1730.10">
    <property type="entry name" value="Sodium/glucose cotransporter"/>
    <property type="match status" value="1"/>
</dbReference>
<dbReference type="InterPro" id="IPR038377">
    <property type="entry name" value="Na/Glc_symporter_sf"/>
</dbReference>
<dbReference type="InterPro" id="IPR011851">
    <property type="entry name" value="Na/Pro_symporter"/>
</dbReference>
<dbReference type="InterPro" id="IPR001734">
    <property type="entry name" value="Na/solute_symporter"/>
</dbReference>
<dbReference type="InterPro" id="IPR050277">
    <property type="entry name" value="Sodium:Solute_Symporter"/>
</dbReference>
<dbReference type="NCBIfam" id="TIGR02121">
    <property type="entry name" value="Na_Pro_sym"/>
    <property type="match status" value="1"/>
</dbReference>
<dbReference type="NCBIfam" id="TIGR00813">
    <property type="entry name" value="sss"/>
    <property type="match status" value="1"/>
</dbReference>
<dbReference type="PANTHER" id="PTHR48086">
    <property type="entry name" value="SODIUM/PROLINE SYMPORTER-RELATED"/>
    <property type="match status" value="1"/>
</dbReference>
<dbReference type="PANTHER" id="PTHR48086:SF3">
    <property type="entry name" value="SODIUM_PROLINE SYMPORTER"/>
    <property type="match status" value="1"/>
</dbReference>
<dbReference type="Pfam" id="PF00474">
    <property type="entry name" value="SSF"/>
    <property type="match status" value="1"/>
</dbReference>
<dbReference type="PROSITE" id="PS50283">
    <property type="entry name" value="NA_SOLUT_SYMP_3"/>
    <property type="match status" value="1"/>
</dbReference>
<feature type="chain" id="PRO_0000364110" description="Sodium/proline symporter 2">
    <location>
        <begin position="1"/>
        <end position="511"/>
    </location>
</feature>
<feature type="transmembrane region" description="Helical" evidence="2">
    <location>
        <begin position="16"/>
        <end position="36"/>
    </location>
</feature>
<feature type="transmembrane region" description="Helical" evidence="2">
    <location>
        <begin position="54"/>
        <end position="74"/>
    </location>
</feature>
<feature type="transmembrane region" description="Helical" evidence="2">
    <location>
        <begin position="85"/>
        <end position="105"/>
    </location>
</feature>
<feature type="transmembrane region" description="Helical" evidence="2">
    <location>
        <begin position="139"/>
        <end position="159"/>
    </location>
</feature>
<feature type="transmembrane region" description="Helical" evidence="2">
    <location>
        <begin position="175"/>
        <end position="195"/>
    </location>
</feature>
<feature type="transmembrane region" description="Helical" evidence="2">
    <location>
        <begin position="204"/>
        <end position="224"/>
    </location>
</feature>
<feature type="transmembrane region" description="Helical" evidence="2">
    <location>
        <begin position="246"/>
        <end position="266"/>
    </location>
</feature>
<feature type="transmembrane region" description="Helical" evidence="2">
    <location>
        <begin position="286"/>
        <end position="306"/>
    </location>
</feature>
<feature type="transmembrane region" description="Helical" evidence="2">
    <location>
        <begin position="327"/>
        <end position="347"/>
    </location>
</feature>
<feature type="transmembrane region" description="Helical" evidence="2">
    <location>
        <begin position="381"/>
        <end position="401"/>
    </location>
</feature>
<feature type="transmembrane region" description="Helical" evidence="2">
    <location>
        <begin position="410"/>
        <end position="430"/>
    </location>
</feature>
<feature type="transmembrane region" description="Helical" evidence="2">
    <location>
        <begin position="438"/>
        <end position="458"/>
    </location>
</feature>
<feature type="transmembrane region" description="Helical" evidence="2">
    <location>
        <begin position="467"/>
        <end position="487"/>
    </location>
</feature>
<accession>Q49YU6</accession>
<sequence length="511" mass="56205">MLILGTSLANQVHASWQTYIMIIIYFTILLFIGYYGYKQATGNLSEFMLGGRSIGPYVTALSAGASDMSGWMIMGLPGSVYSTGLSAMWITIGLSLGAYVNYFVVAPRLRVYTELAGDAITLPDFFKNRLNDHNNYIKIISGLIIVVFFTLYTHSGFVSGGKLFESAFGLNYHWGLLMVAFIVIFYTFFGGYLAVSITDFFQGVIMLIAMVMVPIVALIDLNGIDTFKQVAEMKPTNMNLFKGTTVLGIISLFAWGLGYFGQPHIIVRFMSIKSHKLLPKARRLGISWMVIGLLGAVAVGLTGIAFISERNIKLEDPETLFIVMSQILFHPLVGGFLLAAILAAIMSTISSQLLVTSSSLTEDFYKLIRGEDKAKAHEKEFLMVGRLSVLIVAIVAIWIAWSPNDTILNLVGNAWAGFGAAFSPLVIFSLYWKGLSRTGALAGMITGALVVIIWIVWIKPLASINELFGMYEIIPGFLASVITTYFVSKYTKKPGSFVTHDLDKVKQIVKE</sequence>
<reference key="1">
    <citation type="journal article" date="2005" name="Proc. Natl. Acad. Sci. U.S.A.">
        <title>Whole genome sequence of Staphylococcus saprophyticus reveals the pathogenesis of uncomplicated urinary tract infection.</title>
        <authorList>
            <person name="Kuroda M."/>
            <person name="Yamashita A."/>
            <person name="Hirakawa H."/>
            <person name="Kumano M."/>
            <person name="Morikawa K."/>
            <person name="Higashide M."/>
            <person name="Maruyama A."/>
            <person name="Inose Y."/>
            <person name="Matoba K."/>
            <person name="Toh H."/>
            <person name="Kuhara S."/>
            <person name="Hattori M."/>
            <person name="Ohta T."/>
        </authorList>
    </citation>
    <scope>NUCLEOTIDE SEQUENCE [LARGE SCALE GENOMIC DNA]</scope>
    <source>
        <strain>ATCC 15305 / DSM 20229 / NCIMB 8711 / NCTC 7292 / S-41</strain>
    </source>
</reference>
<gene>
    <name type="primary">putP2</name>
    <name type="ordered locus">SSP0889</name>
</gene>
<organism>
    <name type="scientific">Staphylococcus saprophyticus subsp. saprophyticus (strain ATCC 15305 / DSM 20229 / NCIMB 8711 / NCTC 7292 / S-41)</name>
    <dbReference type="NCBI Taxonomy" id="342451"/>
    <lineage>
        <taxon>Bacteria</taxon>
        <taxon>Bacillati</taxon>
        <taxon>Bacillota</taxon>
        <taxon>Bacilli</taxon>
        <taxon>Bacillales</taxon>
        <taxon>Staphylococcaceae</taxon>
        <taxon>Staphylococcus</taxon>
    </lineage>
</organism>